<reference key="1">
    <citation type="journal article" date="1988" name="J. Gen. Virol.">
        <title>The complete DNA sequence of the long unique region in the genome of herpes simplex virus type 1.</title>
        <authorList>
            <person name="McGeoch D.J."/>
            <person name="Dalrymple M.A."/>
            <person name="Davison A.J."/>
            <person name="Dolan A."/>
            <person name="Frame M.C."/>
            <person name="McNab D."/>
            <person name="Perry L.J."/>
            <person name="Scott J.E."/>
            <person name="Taylor P."/>
        </authorList>
    </citation>
    <scope>NUCLEOTIDE SEQUENCE [LARGE SCALE GENOMIC DNA]</scope>
</reference>
<reference key="2">
    <citation type="journal article" date="1988" name="J. Virol.">
        <title>Structures of herpes simplex virus type 1 genes required for replication of virus DNA.</title>
        <authorList>
            <person name="McGeoch D.J."/>
            <person name="Dalrymple M.A."/>
            <person name="Dolan A."/>
            <person name="McNab D."/>
            <person name="Perry L.J."/>
            <person name="Taylor P."/>
            <person name="Challberg M.D."/>
        </authorList>
    </citation>
    <scope>NUCLEOTIDE SEQUENCE [GENOMIC DNA]</scope>
</reference>
<reference key="3">
    <citation type="journal article" date="2007" name="Microbes Infect.">
        <title>Determination and analysis of the DNA sequence of highly attenuated herpes simplex virus type 1 mutant HF10, a potential oncolytic virus.</title>
        <authorList>
            <person name="Ushijima Y."/>
            <person name="Luo C."/>
            <person name="Goshima F."/>
            <person name="Yamauchi Y."/>
            <person name="Kimura H."/>
            <person name="Nishiyama Y."/>
        </authorList>
    </citation>
    <scope>NUCLEOTIDE SEQUENCE [LARGE SCALE GENOMIC DNA]</scope>
    <source>
        <strain>Nonneuroinvasive mutant HF10</strain>
    </source>
</reference>
<reference key="4">
    <citation type="submission" date="2008-12" db="EMBL/GenBank/DDBJ databases">
        <title>Herpes simplex virus type 1 bacterial artificial chromosome.</title>
        <authorList>
            <person name="Cunningham C."/>
            <person name="Davison A.J."/>
        </authorList>
    </citation>
    <scope>NUCLEOTIDE SEQUENCE [LARGE SCALE GENOMIC DNA]</scope>
    <source>
        <strain>17 syn+</strain>
    </source>
</reference>
<reference key="5">
    <citation type="journal article" date="1989" name="J. Virol.">
        <title>Herpes simplex virus type 1 gene products required for DNA replication: identification and overexpression.</title>
        <authorList>
            <person name="Olivo P.D."/>
            <person name="Nelson N.J."/>
            <person name="Challberg M.D."/>
        </authorList>
    </citation>
    <scope>SUBCELLULAR LOCATION</scope>
    <source>
        <strain>KOS</strain>
    </source>
</reference>
<name>HELI_HHV11</name>
<comment type="function">
    <text evidence="1">Component of the helicase/primase complex. Unwinds the DNA at the replication forks and generates single-stranded DNA for both leading and lagging strand synthesis. The primase synthesizes short RNA primers on the lagging strand that the polymerase elongates using dNTPs. Possesses helicase-like motifs and therefore may act as the helicase subunit of the complex.</text>
</comment>
<comment type="subunit">
    <text evidence="1">Associates with the primase and the primase-associated factor to form the helicase-primase complex.</text>
</comment>
<comment type="subcellular location">
    <subcellularLocation>
        <location evidence="1 3">Host nucleus</location>
    </subcellularLocation>
</comment>
<comment type="similarity">
    <text evidence="1">Belongs to the herpesviridae helicase family.</text>
</comment>
<dbReference type="EC" id="3.6.4.-" evidence="1"/>
<dbReference type="EMBL" id="X14112">
    <property type="protein sequence ID" value="CAA32341.1"/>
    <property type="molecule type" value="Genomic_DNA"/>
</dbReference>
<dbReference type="EMBL" id="AH002360">
    <property type="protein sequence ID" value="AAA45819.1"/>
    <property type="molecule type" value="Genomic_DNA"/>
</dbReference>
<dbReference type="EMBL" id="DQ889502">
    <property type="protein sequence ID" value="ABI63467.1"/>
    <property type="molecule type" value="Genomic_DNA"/>
</dbReference>
<dbReference type="EMBL" id="FJ593289">
    <property type="protein sequence ID" value="ACM62227.1"/>
    <property type="molecule type" value="Genomic_DNA"/>
</dbReference>
<dbReference type="RefSeq" id="YP_009137079.1">
    <property type="nucleotide sequence ID" value="NC_001806.2"/>
</dbReference>
<dbReference type="BioGRID" id="971446">
    <property type="interactions" value="2"/>
</dbReference>
<dbReference type="DIP" id="DIP-1094N"/>
<dbReference type="IntAct" id="P10189">
    <property type="interactions" value="1"/>
</dbReference>
<dbReference type="MINT" id="P10189"/>
<dbReference type="ChEMBL" id="CHEMBL4630721"/>
<dbReference type="DNASU" id="2703420"/>
<dbReference type="GeneID" id="2703420"/>
<dbReference type="KEGG" id="vg:2703420"/>
<dbReference type="Proteomes" id="UP000009294">
    <property type="component" value="Segment"/>
</dbReference>
<dbReference type="Proteomes" id="UP000180652">
    <property type="component" value="Segment"/>
</dbReference>
<dbReference type="GO" id="GO:0042025">
    <property type="term" value="C:host cell nucleus"/>
    <property type="evidence" value="ECO:0000314"/>
    <property type="project" value="UniProtKB"/>
</dbReference>
<dbReference type="GO" id="GO:0005524">
    <property type="term" value="F:ATP binding"/>
    <property type="evidence" value="ECO:0007669"/>
    <property type="project" value="UniProtKB-KW"/>
</dbReference>
<dbReference type="GO" id="GO:0004386">
    <property type="term" value="F:helicase activity"/>
    <property type="evidence" value="ECO:0007669"/>
    <property type="project" value="UniProtKB-KW"/>
</dbReference>
<dbReference type="GO" id="GO:0016787">
    <property type="term" value="F:hydrolase activity"/>
    <property type="evidence" value="ECO:0007669"/>
    <property type="project" value="UniProtKB-KW"/>
</dbReference>
<dbReference type="GO" id="GO:0039686">
    <property type="term" value="P:bidirectional double-stranded viral DNA replication"/>
    <property type="evidence" value="ECO:0000314"/>
    <property type="project" value="UniProtKB"/>
</dbReference>
<dbReference type="GO" id="GO:0006260">
    <property type="term" value="P:DNA replication"/>
    <property type="evidence" value="ECO:0007669"/>
    <property type="project" value="UniProtKB-KW"/>
</dbReference>
<dbReference type="Gene3D" id="3.40.50.300">
    <property type="entry name" value="P-loop containing nucleotide triphosphate hydrolases"/>
    <property type="match status" value="1"/>
</dbReference>
<dbReference type="HAMAP" id="MF_04030">
    <property type="entry name" value="HSV_HELI"/>
    <property type="match status" value="1"/>
</dbReference>
<dbReference type="InterPro" id="IPR003840">
    <property type="entry name" value="DNA_helicase_dom"/>
</dbReference>
<dbReference type="InterPro" id="IPR034711">
    <property type="entry name" value="HSV_HELI"/>
</dbReference>
<dbReference type="InterPro" id="IPR027417">
    <property type="entry name" value="P-loop_NTPase"/>
</dbReference>
<dbReference type="Pfam" id="PF02689">
    <property type="entry name" value="Herpes_Helicase"/>
    <property type="match status" value="1"/>
</dbReference>
<dbReference type="SUPFAM" id="SSF52540">
    <property type="entry name" value="P-loop containing nucleoside triphosphate hydrolases"/>
    <property type="match status" value="2"/>
</dbReference>
<organismHost>
    <name type="scientific">Homo sapiens</name>
    <name type="common">Human</name>
    <dbReference type="NCBI Taxonomy" id="9606"/>
</organismHost>
<accession>P10189</accession>
<accession>B9VQD2</accession>
<accession>Q09IC8</accession>
<sequence length="882" mass="98715">MAAAGGERQLDGQKPGPPHLQQPGDRPAVPGRAEAFLNFTSMHGVQPILKRIRELSQQQLDGAQVPHLQWFRDVAALESPAGLPLREFPFAVYLITGNAGSGKSTCVQTINEVLDCVVTGATRIAAQNMYAKLSGAFLSRPINTIFHEFGFRGNHVQAQLGQYPYTLTSNPASLEDLQRRDLTYYWEVILDLTKRALAASGGEELRNEFRALAALERTLGLAEGALTRLAPATHGALPAFTRSNVIVIDEAGLLGRHLLTAVVYCWWMINALYHTPQYAARLRPVLVCVGSPTQTASLESTFEHQKLRCSVRQSENVLTYLICNRTLREYARLSYSWAIFINNKRCVEHEFGNLMKVLEYGLPITEEHMQFVDRFVVPENYITNPANLPGWTRLFSSHKEVSAYMAKLHAYLKVTREGEFVVFTLPVLTFVSVKEFDEYRRLTHQPGLTIEKWLTANASRITNYSQSQDQDAGHMRCEVHSKQQLVVARNDVTYVLNSQIAVTARLRKLVFGFSGTFRAFEAVLRDDSFVKTQGETSVEFAYRFLSRLIFSGLISFYNFLQRPGLDATQRTLAYARMGELTAEILSLRPKSSGVPTQASVMADAGAPGERAFDFKQLGPRDGGPDDFPDDDLDVIFAGLDEQQLDVFYCHYTPGEPETTAAVHTQFALLKRAFLGRFRILQELFGEAFEVAPFSTYVDNVIFRGCEMLTGSPRGGLMSVALQTDNYTLMGYTYARVFAFADELRRRHATANVAELLEEAPLPYVVLRDQHGFMSVVNTNISEFVESIDSTELAMAINADYGISSKLAMTITRSQGLSLDKVAICFTPGNLRLNSAYVAMSRTTSSEFLRMNLNPLRERHERDDVISEHILSALRDPNVVIVY</sequence>
<proteinExistence type="inferred from homology"/>
<feature type="chain" id="PRO_0000115845" description="DNA replication helicase">
    <location>
        <begin position="1"/>
        <end position="882"/>
    </location>
</feature>
<feature type="region of interest" description="Disordered" evidence="2">
    <location>
        <begin position="1"/>
        <end position="29"/>
    </location>
</feature>
<feature type="binding site" evidence="1">
    <location>
        <begin position="97"/>
        <end position="104"/>
    </location>
    <ligand>
        <name>ATP</name>
        <dbReference type="ChEBI" id="CHEBI:30616"/>
    </ligand>
</feature>
<feature type="sequence variant" description="In strain: Nonneuroinvasive mutant HF10.">
    <original>K</original>
    <variation>R</variation>
    <location>
        <position position="14"/>
    </location>
</feature>
<feature type="sequence variant" description="In strain: Nonneuroinvasive mutant HF10.">
    <original>H</original>
    <variation>R</variation>
    <location>
        <position position="67"/>
    </location>
</feature>
<feature type="sequence variant" description="In strain: Nonneuroinvasive mutant HF10.">
    <original>L</original>
    <variation>S</variation>
    <location>
        <position position="205"/>
    </location>
</feature>
<feature type="sequence variant" description="In strain: Nonneuroinvasive mutant HF10.">
    <original>V</original>
    <variation>I</variation>
    <location>
        <position position="662"/>
    </location>
</feature>
<feature type="sequence variant" description="In strain: Nonneuroinvasive mutant HF10.">
    <original>V</original>
    <variation>G</variation>
    <location>
        <position position="690"/>
    </location>
</feature>
<feature type="sequence conflict" description="In Ref. 2; AAA45819." evidence="4" ref="2">
    <original>E</original>
    <variation>D</variation>
    <location>
        <position position="860"/>
    </location>
</feature>
<keyword id="KW-0067">ATP-binding</keyword>
<keyword id="KW-0235">DNA replication</keyword>
<keyword id="KW-0347">Helicase</keyword>
<keyword id="KW-1048">Host nucleus</keyword>
<keyword id="KW-0378">Hydrolase</keyword>
<keyword id="KW-0547">Nucleotide-binding</keyword>
<keyword id="KW-1185">Reference proteome</keyword>
<organism>
    <name type="scientific">Human herpesvirus 1 (strain 17)</name>
    <name type="common">HHV-1</name>
    <name type="synonym">Human herpes simplex virus 1</name>
    <dbReference type="NCBI Taxonomy" id="10299"/>
    <lineage>
        <taxon>Viruses</taxon>
        <taxon>Duplodnaviria</taxon>
        <taxon>Heunggongvirae</taxon>
        <taxon>Peploviricota</taxon>
        <taxon>Herviviricetes</taxon>
        <taxon>Herpesvirales</taxon>
        <taxon>Orthoherpesviridae</taxon>
        <taxon>Alphaherpesvirinae</taxon>
        <taxon>Simplexvirus</taxon>
        <taxon>Simplexvirus humanalpha1</taxon>
        <taxon>Human herpesvirus 1</taxon>
    </lineage>
</organism>
<gene>
    <name evidence="1" type="primary">HELI</name>
    <name type="ordered locus">UL5</name>
</gene>
<evidence type="ECO:0000255" key="1">
    <source>
        <dbReference type="HAMAP-Rule" id="MF_04030"/>
    </source>
</evidence>
<evidence type="ECO:0000256" key="2">
    <source>
        <dbReference type="SAM" id="MobiDB-lite"/>
    </source>
</evidence>
<evidence type="ECO:0000269" key="3">
    <source>
    </source>
</evidence>
<evidence type="ECO:0000305" key="4"/>
<protein>
    <recommendedName>
        <fullName evidence="1">DNA replication helicase</fullName>
        <ecNumber evidence="1">3.6.4.-</ecNumber>
    </recommendedName>
</protein>